<feature type="chain" id="PRO_0000426782" description="Probable acyl-CoA dehydrogenase fadE25">
    <location>
        <begin position="1"/>
        <end position="389"/>
    </location>
</feature>
<gene>
    <name type="primary">fadE25</name>
    <name type="synonym">acd</name>
    <name type="ordered locus">MT3374</name>
</gene>
<organism>
    <name type="scientific">Mycobacterium tuberculosis (strain CDC 1551 / Oshkosh)</name>
    <dbReference type="NCBI Taxonomy" id="83331"/>
    <lineage>
        <taxon>Bacteria</taxon>
        <taxon>Bacillati</taxon>
        <taxon>Actinomycetota</taxon>
        <taxon>Actinomycetes</taxon>
        <taxon>Mycobacteriales</taxon>
        <taxon>Mycobacteriaceae</taxon>
        <taxon>Mycobacterium</taxon>
        <taxon>Mycobacterium tuberculosis complex</taxon>
    </lineage>
</organism>
<comment type="catalytic activity">
    <reaction>
        <text>a 2,3-saturated acyl-CoA + A = a 2,3-dehydroacyl-CoA + AH2</text>
        <dbReference type="Rhea" id="RHEA:48608"/>
        <dbReference type="ChEBI" id="CHEBI:13193"/>
        <dbReference type="ChEBI" id="CHEBI:17499"/>
        <dbReference type="ChEBI" id="CHEBI:60015"/>
        <dbReference type="ChEBI" id="CHEBI:65111"/>
    </reaction>
</comment>
<comment type="cofactor">
    <cofactor evidence="1">
        <name>FAD</name>
        <dbReference type="ChEBI" id="CHEBI:57692"/>
    </cofactor>
</comment>
<comment type="similarity">
    <text evidence="2">Belongs to the acyl-CoA dehydrogenase family.</text>
</comment>
<protein>
    <recommendedName>
        <fullName>Probable acyl-CoA dehydrogenase fadE25</fullName>
        <ecNumber>1.3.99.-</ecNumber>
    </recommendedName>
</protein>
<name>ACDP_MYCTO</name>
<reference key="1">
    <citation type="journal article" date="2002" name="J. Bacteriol.">
        <title>Whole-genome comparison of Mycobacterium tuberculosis clinical and laboratory strains.</title>
        <authorList>
            <person name="Fleischmann R.D."/>
            <person name="Alland D."/>
            <person name="Eisen J.A."/>
            <person name="Carpenter L."/>
            <person name="White O."/>
            <person name="Peterson J.D."/>
            <person name="DeBoy R.T."/>
            <person name="Dodson R.J."/>
            <person name="Gwinn M.L."/>
            <person name="Haft D.H."/>
            <person name="Hickey E.K."/>
            <person name="Kolonay J.F."/>
            <person name="Nelson W.C."/>
            <person name="Umayam L.A."/>
            <person name="Ermolaeva M.D."/>
            <person name="Salzberg S.L."/>
            <person name="Delcher A."/>
            <person name="Utterback T.R."/>
            <person name="Weidman J.F."/>
            <person name="Khouri H.M."/>
            <person name="Gill J."/>
            <person name="Mikula A."/>
            <person name="Bishai W."/>
            <person name="Jacobs W.R. Jr."/>
            <person name="Venter J.C."/>
            <person name="Fraser C.M."/>
        </authorList>
    </citation>
    <scope>NUCLEOTIDE SEQUENCE [LARGE SCALE GENOMIC DNA]</scope>
    <source>
        <strain>CDC 1551 / Oshkosh</strain>
    </source>
</reference>
<evidence type="ECO:0000250" key="1"/>
<evidence type="ECO:0000305" key="2"/>
<sequence>MVGWAGNPSFDLFKLPEEHDEMRSAIRALAEKEIAPHAAEVDEKARFPEEALVALNSSGFNAVHIPEEYGGQGADSVATCIVIEEVARVDASASLIPAVNKLGTMGLILRGSEELKKQVLPALAAEGAMASYALSEREAGSDAASMRTRAKADGDHWILNGAKCWITNGGKSTWYTVMAVTDPDRGANGISAFMVHKDDEGFTVGPKERKLGIKGSPTTELYFENCRIPGDRIIGEPGTGFKTALATLDHTRPTIGAQAVGIAQGALDAAIAYTKDRKQFGESISTFQAVQFMLADMAMKVEAARLMVYSAAARAERGEPDLGFISAASKCFASDVAMEVTTDAVQLFGGAGYTTDFPVERFMRDAKITQIYEGTNQIQRVVMSRALLR</sequence>
<accession>P9WQG0</accession>
<accession>L0TCB5</accession>
<accession>P63427</accession>
<accession>P96879</accession>
<keyword id="KW-0274">FAD</keyword>
<keyword id="KW-0285">Flavoprotein</keyword>
<keyword id="KW-0560">Oxidoreductase</keyword>
<keyword id="KW-1185">Reference proteome</keyword>
<dbReference type="EC" id="1.3.99.-"/>
<dbReference type="EMBL" id="AE000516">
    <property type="protein sequence ID" value="AAK47715.1"/>
    <property type="molecule type" value="Genomic_DNA"/>
</dbReference>
<dbReference type="PIR" id="C70979">
    <property type="entry name" value="C70979"/>
</dbReference>
<dbReference type="RefSeq" id="WP_003417122.1">
    <property type="nucleotide sequence ID" value="NZ_KK341227.1"/>
</dbReference>
<dbReference type="SMR" id="P9WQG0"/>
<dbReference type="KEGG" id="mtc:MT3374"/>
<dbReference type="PATRIC" id="fig|83331.31.peg.3631"/>
<dbReference type="HOGENOM" id="CLU_018204_0_2_11"/>
<dbReference type="Proteomes" id="UP000001020">
    <property type="component" value="Chromosome"/>
</dbReference>
<dbReference type="GO" id="GO:0003995">
    <property type="term" value="F:acyl-CoA dehydrogenase activity"/>
    <property type="evidence" value="ECO:0007669"/>
    <property type="project" value="InterPro"/>
</dbReference>
<dbReference type="GO" id="GO:0050660">
    <property type="term" value="F:flavin adenine dinucleotide binding"/>
    <property type="evidence" value="ECO:0007669"/>
    <property type="project" value="InterPro"/>
</dbReference>
<dbReference type="CDD" id="cd01158">
    <property type="entry name" value="SCAD_SBCAD"/>
    <property type="match status" value="1"/>
</dbReference>
<dbReference type="FunFam" id="1.10.540.10:FF:000023">
    <property type="entry name" value="Acyl-CoA dehydrogenase FadE25"/>
    <property type="match status" value="1"/>
</dbReference>
<dbReference type="FunFam" id="1.20.140.10:FF:000004">
    <property type="entry name" value="Acyl-CoA dehydrogenase FadE25"/>
    <property type="match status" value="1"/>
</dbReference>
<dbReference type="FunFam" id="2.40.110.10:FF:000001">
    <property type="entry name" value="Acyl-CoA dehydrogenase, mitochondrial"/>
    <property type="match status" value="1"/>
</dbReference>
<dbReference type="Gene3D" id="1.10.540.10">
    <property type="entry name" value="Acyl-CoA dehydrogenase/oxidase, N-terminal domain"/>
    <property type="match status" value="1"/>
</dbReference>
<dbReference type="Gene3D" id="2.40.110.10">
    <property type="entry name" value="Butyryl-CoA Dehydrogenase, subunit A, domain 2"/>
    <property type="match status" value="1"/>
</dbReference>
<dbReference type="Gene3D" id="1.20.140.10">
    <property type="entry name" value="Butyryl-CoA Dehydrogenase, subunit A, domain 3"/>
    <property type="match status" value="1"/>
</dbReference>
<dbReference type="InterPro" id="IPR006089">
    <property type="entry name" value="Acyl-CoA_DH_CS"/>
</dbReference>
<dbReference type="InterPro" id="IPR006091">
    <property type="entry name" value="Acyl-CoA_Oxase/DH_mid-dom"/>
</dbReference>
<dbReference type="InterPro" id="IPR046373">
    <property type="entry name" value="Acyl-CoA_Oxase/DH_mid-dom_sf"/>
</dbReference>
<dbReference type="InterPro" id="IPR036250">
    <property type="entry name" value="AcylCo_DH-like_C"/>
</dbReference>
<dbReference type="InterPro" id="IPR009075">
    <property type="entry name" value="AcylCo_DH/oxidase_C"/>
</dbReference>
<dbReference type="InterPro" id="IPR013786">
    <property type="entry name" value="AcylCoA_DH/ox_N"/>
</dbReference>
<dbReference type="InterPro" id="IPR037069">
    <property type="entry name" value="AcylCoA_DH/ox_N_sf"/>
</dbReference>
<dbReference type="InterPro" id="IPR009100">
    <property type="entry name" value="AcylCoA_DH/oxidase_NM_dom_sf"/>
</dbReference>
<dbReference type="PANTHER" id="PTHR43884">
    <property type="entry name" value="ACYL-COA DEHYDROGENASE"/>
    <property type="match status" value="1"/>
</dbReference>
<dbReference type="PANTHER" id="PTHR43884:SF12">
    <property type="entry name" value="ISOVALERYL-COA DEHYDROGENASE, MITOCHONDRIAL-RELATED"/>
    <property type="match status" value="1"/>
</dbReference>
<dbReference type="Pfam" id="PF00441">
    <property type="entry name" value="Acyl-CoA_dh_1"/>
    <property type="match status" value="1"/>
</dbReference>
<dbReference type="Pfam" id="PF02770">
    <property type="entry name" value="Acyl-CoA_dh_M"/>
    <property type="match status" value="1"/>
</dbReference>
<dbReference type="Pfam" id="PF02771">
    <property type="entry name" value="Acyl-CoA_dh_N"/>
    <property type="match status" value="1"/>
</dbReference>
<dbReference type="PIRSF" id="PIRSF016578">
    <property type="entry name" value="HsaA"/>
    <property type="match status" value="1"/>
</dbReference>
<dbReference type="SUPFAM" id="SSF47203">
    <property type="entry name" value="Acyl-CoA dehydrogenase C-terminal domain-like"/>
    <property type="match status" value="1"/>
</dbReference>
<dbReference type="SUPFAM" id="SSF56645">
    <property type="entry name" value="Acyl-CoA dehydrogenase NM domain-like"/>
    <property type="match status" value="1"/>
</dbReference>
<dbReference type="PROSITE" id="PS00072">
    <property type="entry name" value="ACYL_COA_DH_1"/>
    <property type="match status" value="1"/>
</dbReference>
<dbReference type="PROSITE" id="PS00073">
    <property type="entry name" value="ACYL_COA_DH_2"/>
    <property type="match status" value="1"/>
</dbReference>
<proteinExistence type="inferred from homology"/>